<protein>
    <recommendedName>
        <fullName evidence="1">Small ribosomal subunit protein bS6</fullName>
    </recommendedName>
    <alternativeName>
        <fullName evidence="3">30S ribosomal protein S6</fullName>
    </alternativeName>
</protein>
<organism>
    <name type="scientific">Parasynechococcus marenigrum (strain WH8102)</name>
    <dbReference type="NCBI Taxonomy" id="84588"/>
    <lineage>
        <taxon>Bacteria</taxon>
        <taxon>Bacillati</taxon>
        <taxon>Cyanobacteriota</taxon>
        <taxon>Cyanophyceae</taxon>
        <taxon>Synechococcales</taxon>
        <taxon>Prochlorococcaceae</taxon>
        <taxon>Parasynechococcus</taxon>
        <taxon>Parasynechococcus marenigrum</taxon>
    </lineage>
</organism>
<reference key="1">
    <citation type="journal article" date="2003" name="Nature">
        <title>The genome of a motile marine Synechococcus.</title>
        <authorList>
            <person name="Palenik B."/>
            <person name="Brahamsha B."/>
            <person name="Larimer F.W."/>
            <person name="Land M.L."/>
            <person name="Hauser L."/>
            <person name="Chain P."/>
            <person name="Lamerdin J.E."/>
            <person name="Regala W."/>
            <person name="Allen E.E."/>
            <person name="McCarren J."/>
            <person name="Paulsen I.T."/>
            <person name="Dufresne A."/>
            <person name="Partensky F."/>
            <person name="Webb E.A."/>
            <person name="Waterbury J."/>
        </authorList>
    </citation>
    <scope>NUCLEOTIDE SEQUENCE [LARGE SCALE GENOMIC DNA]</scope>
    <source>
        <strain>WH8102</strain>
    </source>
</reference>
<proteinExistence type="inferred from homology"/>
<feature type="chain" id="PRO_0000176859" description="Small ribosomal subunit protein bS6">
    <location>
        <begin position="1"/>
        <end position="127"/>
    </location>
</feature>
<feature type="region of interest" description="Disordered" evidence="2">
    <location>
        <begin position="99"/>
        <end position="127"/>
    </location>
</feature>
<feature type="compositionally biased region" description="Low complexity" evidence="2">
    <location>
        <begin position="109"/>
        <end position="127"/>
    </location>
</feature>
<name>RS6_PARMW</name>
<dbReference type="EMBL" id="BX569695">
    <property type="protein sequence ID" value="CAE09026.1"/>
    <property type="molecule type" value="Genomic_DNA"/>
</dbReference>
<dbReference type="RefSeq" id="WP_011129364.1">
    <property type="nucleotide sequence ID" value="NC_005070.1"/>
</dbReference>
<dbReference type="SMR" id="Q7U3C1"/>
<dbReference type="STRING" id="84588.SYNW2511"/>
<dbReference type="KEGG" id="syw:SYNW2511"/>
<dbReference type="eggNOG" id="COG0360">
    <property type="taxonomic scope" value="Bacteria"/>
</dbReference>
<dbReference type="HOGENOM" id="CLU_113441_4_2_3"/>
<dbReference type="Proteomes" id="UP000001422">
    <property type="component" value="Chromosome"/>
</dbReference>
<dbReference type="GO" id="GO:0005737">
    <property type="term" value="C:cytoplasm"/>
    <property type="evidence" value="ECO:0007669"/>
    <property type="project" value="UniProtKB-ARBA"/>
</dbReference>
<dbReference type="GO" id="GO:1990904">
    <property type="term" value="C:ribonucleoprotein complex"/>
    <property type="evidence" value="ECO:0007669"/>
    <property type="project" value="UniProtKB-KW"/>
</dbReference>
<dbReference type="GO" id="GO:0005840">
    <property type="term" value="C:ribosome"/>
    <property type="evidence" value="ECO:0007669"/>
    <property type="project" value="UniProtKB-KW"/>
</dbReference>
<dbReference type="GO" id="GO:0070181">
    <property type="term" value="F:small ribosomal subunit rRNA binding"/>
    <property type="evidence" value="ECO:0007669"/>
    <property type="project" value="TreeGrafter"/>
</dbReference>
<dbReference type="GO" id="GO:0003735">
    <property type="term" value="F:structural constituent of ribosome"/>
    <property type="evidence" value="ECO:0007669"/>
    <property type="project" value="InterPro"/>
</dbReference>
<dbReference type="GO" id="GO:0006412">
    <property type="term" value="P:translation"/>
    <property type="evidence" value="ECO:0007669"/>
    <property type="project" value="UniProtKB-UniRule"/>
</dbReference>
<dbReference type="CDD" id="cd15487">
    <property type="entry name" value="bS6_chloro_cyano"/>
    <property type="match status" value="1"/>
</dbReference>
<dbReference type="Gene3D" id="3.30.70.60">
    <property type="match status" value="1"/>
</dbReference>
<dbReference type="HAMAP" id="MF_00360">
    <property type="entry name" value="Ribosomal_bS6"/>
    <property type="match status" value="1"/>
</dbReference>
<dbReference type="InterPro" id="IPR000529">
    <property type="entry name" value="Ribosomal_bS6"/>
</dbReference>
<dbReference type="InterPro" id="IPR035980">
    <property type="entry name" value="Ribosomal_bS6_sf"/>
</dbReference>
<dbReference type="InterPro" id="IPR020814">
    <property type="entry name" value="Ribosomal_S6_plastid/chlpt"/>
</dbReference>
<dbReference type="InterPro" id="IPR014717">
    <property type="entry name" value="Transl_elong_EF1B/ribsomal_bS6"/>
</dbReference>
<dbReference type="NCBIfam" id="TIGR00166">
    <property type="entry name" value="S6"/>
    <property type="match status" value="1"/>
</dbReference>
<dbReference type="PANTHER" id="PTHR21011">
    <property type="entry name" value="MITOCHONDRIAL 28S RIBOSOMAL PROTEIN S6"/>
    <property type="match status" value="1"/>
</dbReference>
<dbReference type="PANTHER" id="PTHR21011:SF1">
    <property type="entry name" value="SMALL RIBOSOMAL SUBUNIT PROTEIN BS6M"/>
    <property type="match status" value="1"/>
</dbReference>
<dbReference type="Pfam" id="PF01250">
    <property type="entry name" value="Ribosomal_S6"/>
    <property type="match status" value="1"/>
</dbReference>
<dbReference type="SUPFAM" id="SSF54995">
    <property type="entry name" value="Ribosomal protein S6"/>
    <property type="match status" value="1"/>
</dbReference>
<comment type="function">
    <text evidence="1">Binds together with bS18 to 16S ribosomal RNA.</text>
</comment>
<comment type="similarity">
    <text evidence="1">Belongs to the bacterial ribosomal protein bS6 family.</text>
</comment>
<evidence type="ECO:0000255" key="1">
    <source>
        <dbReference type="HAMAP-Rule" id="MF_00360"/>
    </source>
</evidence>
<evidence type="ECO:0000256" key="2">
    <source>
        <dbReference type="SAM" id="MobiDB-lite"/>
    </source>
</evidence>
<evidence type="ECO:0000305" key="3"/>
<gene>
    <name evidence="1" type="primary">rpsF</name>
    <name evidence="1" type="synonym">rps6</name>
    <name type="ordered locus">SYNW2511</name>
</gene>
<keyword id="KW-0687">Ribonucleoprotein</keyword>
<keyword id="KW-0689">Ribosomal protein</keyword>
<keyword id="KW-0694">RNA-binding</keyword>
<keyword id="KW-0699">rRNA-binding</keyword>
<sequence length="127" mass="14205">MTLDPYYETMYILRPDIPEEEVESHLTKYRDMLVEAGADVLDNQMRGKRRLAYPIDKHKEGIYVQLSHNGDGQQVAVLEKAMRLSEDVIRYLTVKQEGPLPAPRVVPGSEPAAAPQEQPAANSEAAS</sequence>
<accession>Q7U3C1</accession>